<reference key="1">
    <citation type="journal article" date="2005" name="Science">
        <title>The transcriptional landscape of the mammalian genome.</title>
        <authorList>
            <person name="Carninci P."/>
            <person name="Kasukawa T."/>
            <person name="Katayama S."/>
            <person name="Gough J."/>
            <person name="Frith M.C."/>
            <person name="Maeda N."/>
            <person name="Oyama R."/>
            <person name="Ravasi T."/>
            <person name="Lenhard B."/>
            <person name="Wells C."/>
            <person name="Kodzius R."/>
            <person name="Shimokawa K."/>
            <person name="Bajic V.B."/>
            <person name="Brenner S.E."/>
            <person name="Batalov S."/>
            <person name="Forrest A.R."/>
            <person name="Zavolan M."/>
            <person name="Davis M.J."/>
            <person name="Wilming L.G."/>
            <person name="Aidinis V."/>
            <person name="Allen J.E."/>
            <person name="Ambesi-Impiombato A."/>
            <person name="Apweiler R."/>
            <person name="Aturaliya R.N."/>
            <person name="Bailey T.L."/>
            <person name="Bansal M."/>
            <person name="Baxter L."/>
            <person name="Beisel K.W."/>
            <person name="Bersano T."/>
            <person name="Bono H."/>
            <person name="Chalk A.M."/>
            <person name="Chiu K.P."/>
            <person name="Choudhary V."/>
            <person name="Christoffels A."/>
            <person name="Clutterbuck D.R."/>
            <person name="Crowe M.L."/>
            <person name="Dalla E."/>
            <person name="Dalrymple B.P."/>
            <person name="de Bono B."/>
            <person name="Della Gatta G."/>
            <person name="di Bernardo D."/>
            <person name="Down T."/>
            <person name="Engstrom P."/>
            <person name="Fagiolini M."/>
            <person name="Faulkner G."/>
            <person name="Fletcher C.F."/>
            <person name="Fukushima T."/>
            <person name="Furuno M."/>
            <person name="Futaki S."/>
            <person name="Gariboldi M."/>
            <person name="Georgii-Hemming P."/>
            <person name="Gingeras T.R."/>
            <person name="Gojobori T."/>
            <person name="Green R.E."/>
            <person name="Gustincich S."/>
            <person name="Harbers M."/>
            <person name="Hayashi Y."/>
            <person name="Hensch T.K."/>
            <person name="Hirokawa N."/>
            <person name="Hill D."/>
            <person name="Huminiecki L."/>
            <person name="Iacono M."/>
            <person name="Ikeo K."/>
            <person name="Iwama A."/>
            <person name="Ishikawa T."/>
            <person name="Jakt M."/>
            <person name="Kanapin A."/>
            <person name="Katoh M."/>
            <person name="Kawasawa Y."/>
            <person name="Kelso J."/>
            <person name="Kitamura H."/>
            <person name="Kitano H."/>
            <person name="Kollias G."/>
            <person name="Krishnan S.P."/>
            <person name="Kruger A."/>
            <person name="Kummerfeld S.K."/>
            <person name="Kurochkin I.V."/>
            <person name="Lareau L.F."/>
            <person name="Lazarevic D."/>
            <person name="Lipovich L."/>
            <person name="Liu J."/>
            <person name="Liuni S."/>
            <person name="McWilliam S."/>
            <person name="Madan Babu M."/>
            <person name="Madera M."/>
            <person name="Marchionni L."/>
            <person name="Matsuda H."/>
            <person name="Matsuzawa S."/>
            <person name="Miki H."/>
            <person name="Mignone F."/>
            <person name="Miyake S."/>
            <person name="Morris K."/>
            <person name="Mottagui-Tabar S."/>
            <person name="Mulder N."/>
            <person name="Nakano N."/>
            <person name="Nakauchi H."/>
            <person name="Ng P."/>
            <person name="Nilsson R."/>
            <person name="Nishiguchi S."/>
            <person name="Nishikawa S."/>
            <person name="Nori F."/>
            <person name="Ohara O."/>
            <person name="Okazaki Y."/>
            <person name="Orlando V."/>
            <person name="Pang K.C."/>
            <person name="Pavan W.J."/>
            <person name="Pavesi G."/>
            <person name="Pesole G."/>
            <person name="Petrovsky N."/>
            <person name="Piazza S."/>
            <person name="Reed J."/>
            <person name="Reid J.F."/>
            <person name="Ring B.Z."/>
            <person name="Ringwald M."/>
            <person name="Rost B."/>
            <person name="Ruan Y."/>
            <person name="Salzberg S.L."/>
            <person name="Sandelin A."/>
            <person name="Schneider C."/>
            <person name="Schoenbach C."/>
            <person name="Sekiguchi K."/>
            <person name="Semple C.A."/>
            <person name="Seno S."/>
            <person name="Sessa L."/>
            <person name="Sheng Y."/>
            <person name="Shibata Y."/>
            <person name="Shimada H."/>
            <person name="Shimada K."/>
            <person name="Silva D."/>
            <person name="Sinclair B."/>
            <person name="Sperling S."/>
            <person name="Stupka E."/>
            <person name="Sugiura K."/>
            <person name="Sultana R."/>
            <person name="Takenaka Y."/>
            <person name="Taki K."/>
            <person name="Tammoja K."/>
            <person name="Tan S.L."/>
            <person name="Tang S."/>
            <person name="Taylor M.S."/>
            <person name="Tegner J."/>
            <person name="Teichmann S.A."/>
            <person name="Ueda H.R."/>
            <person name="van Nimwegen E."/>
            <person name="Verardo R."/>
            <person name="Wei C.L."/>
            <person name="Yagi K."/>
            <person name="Yamanishi H."/>
            <person name="Zabarovsky E."/>
            <person name="Zhu S."/>
            <person name="Zimmer A."/>
            <person name="Hide W."/>
            <person name="Bult C."/>
            <person name="Grimmond S.M."/>
            <person name="Teasdale R.D."/>
            <person name="Liu E.T."/>
            <person name="Brusic V."/>
            <person name="Quackenbush J."/>
            <person name="Wahlestedt C."/>
            <person name="Mattick J.S."/>
            <person name="Hume D.A."/>
            <person name="Kai C."/>
            <person name="Sasaki D."/>
            <person name="Tomaru Y."/>
            <person name="Fukuda S."/>
            <person name="Kanamori-Katayama M."/>
            <person name="Suzuki M."/>
            <person name="Aoki J."/>
            <person name="Arakawa T."/>
            <person name="Iida J."/>
            <person name="Imamura K."/>
            <person name="Itoh M."/>
            <person name="Kato T."/>
            <person name="Kawaji H."/>
            <person name="Kawagashira N."/>
            <person name="Kawashima T."/>
            <person name="Kojima M."/>
            <person name="Kondo S."/>
            <person name="Konno H."/>
            <person name="Nakano K."/>
            <person name="Ninomiya N."/>
            <person name="Nishio T."/>
            <person name="Okada M."/>
            <person name="Plessy C."/>
            <person name="Shibata K."/>
            <person name="Shiraki T."/>
            <person name="Suzuki S."/>
            <person name="Tagami M."/>
            <person name="Waki K."/>
            <person name="Watahiki A."/>
            <person name="Okamura-Oho Y."/>
            <person name="Suzuki H."/>
            <person name="Kawai J."/>
            <person name="Hayashizaki Y."/>
        </authorList>
    </citation>
    <scope>NUCLEOTIDE SEQUENCE [LARGE SCALE MRNA]</scope>
    <source>
        <strain>C57BL/6J</strain>
        <tissue>Head</tissue>
    </source>
</reference>
<reference key="2">
    <citation type="journal article" date="2009" name="PLoS Biol.">
        <title>Lineage-specific biology revealed by a finished genome assembly of the mouse.</title>
        <authorList>
            <person name="Church D.M."/>
            <person name="Goodstadt L."/>
            <person name="Hillier L.W."/>
            <person name="Zody M.C."/>
            <person name="Goldstein S."/>
            <person name="She X."/>
            <person name="Bult C.J."/>
            <person name="Agarwala R."/>
            <person name="Cherry J.L."/>
            <person name="DiCuccio M."/>
            <person name="Hlavina W."/>
            <person name="Kapustin Y."/>
            <person name="Meric P."/>
            <person name="Maglott D."/>
            <person name="Birtle Z."/>
            <person name="Marques A.C."/>
            <person name="Graves T."/>
            <person name="Zhou S."/>
            <person name="Teague B."/>
            <person name="Potamousis K."/>
            <person name="Churas C."/>
            <person name="Place M."/>
            <person name="Herschleb J."/>
            <person name="Runnheim R."/>
            <person name="Forrest D."/>
            <person name="Amos-Landgraf J."/>
            <person name="Schwartz D.C."/>
            <person name="Cheng Z."/>
            <person name="Lindblad-Toh K."/>
            <person name="Eichler E.E."/>
            <person name="Ponting C.P."/>
        </authorList>
    </citation>
    <scope>NUCLEOTIDE SEQUENCE [LARGE SCALE GENOMIC DNA]</scope>
    <source>
        <strain>C57BL/6J</strain>
    </source>
</reference>
<reference key="3">
    <citation type="journal article" date="2004" name="Genome Res.">
        <title>The status, quality, and expansion of the NIH full-length cDNA project: the Mammalian Gene Collection (MGC).</title>
        <authorList>
            <consortium name="The MGC Project Team"/>
        </authorList>
    </citation>
    <scope>NUCLEOTIDE SEQUENCE [LARGE SCALE MRNA]</scope>
    <source>
        <strain>129</strain>
        <tissue>Mammary tumor</tissue>
    </source>
</reference>
<reference key="4">
    <citation type="submission" date="2009-01" db="UniProtKB">
        <authorList>
            <person name="Lubec G."/>
            <person name="Sunyer B."/>
            <person name="Chen W.-Q."/>
        </authorList>
    </citation>
    <scope>PROTEIN SEQUENCE OF 522-531</scope>
    <scope>IDENTIFICATION BY MASS SPECTROMETRY</scope>
    <source>
        <strain>OF1</strain>
        <tissue>Hippocampus</tissue>
    </source>
</reference>
<reference key="5">
    <citation type="journal article" date="2004" name="Biochem. Biophys. Res. Commun.">
        <title>WGEF is a novel RhoGEF expressed in intestine, liver, heart, and kidney.</title>
        <authorList>
            <person name="Wang Y."/>
            <person name="Suzuki H."/>
            <person name="Yokoo T."/>
            <person name="Tada-Iida K."/>
            <person name="Kihara R."/>
            <person name="Miura M."/>
            <person name="Watanabe K."/>
            <person name="Sone H."/>
            <person name="Shimano H."/>
            <person name="Toyoshima H."/>
            <person name="Yamada N."/>
        </authorList>
    </citation>
    <scope>FUNCTION</scope>
    <scope>TISSUE SPECIFICITY</scope>
</reference>
<reference key="6">
    <citation type="journal article" date="2005" name="Neuron">
        <title>Eph-dependent tyrosine phosphorylation of ephexin1 modulates growth cone collapse.</title>
        <authorList>
            <person name="Sahin M."/>
            <person name="Greer P.L."/>
            <person name="Lin M.Z."/>
            <person name="Poucher H."/>
            <person name="Eberhart J."/>
            <person name="Schmidt S."/>
            <person name="Wright T.M."/>
            <person name="Shamah S.M."/>
            <person name="O'connell S."/>
            <person name="Cowan C.W."/>
            <person name="Hu L."/>
            <person name="Goldberg J.L."/>
            <person name="Debant A."/>
            <person name="Corfas G."/>
            <person name="Krull C.E."/>
            <person name="Greenberg M.E."/>
        </authorList>
    </citation>
    <scope>IDENTIFICATION</scope>
</reference>
<protein>
    <recommendedName>
        <fullName>Rho guanine nucleotide exchange factor 19</fullName>
    </recommendedName>
    <alternativeName>
        <fullName>Ephexin-2</fullName>
    </alternativeName>
    <alternativeName>
        <fullName>Weakly similar to Rho GEF 5</fullName>
    </alternativeName>
</protein>
<keyword id="KW-0903">Direct protein sequencing</keyword>
<keyword id="KW-0343">GTPase activation</keyword>
<keyword id="KW-0344">Guanine-nucleotide releasing factor</keyword>
<keyword id="KW-1185">Reference proteome</keyword>
<keyword id="KW-0728">SH3 domain</keyword>
<proteinExistence type="evidence at protein level"/>
<name>ARHGJ_MOUSE</name>
<gene>
    <name type="primary">Arhgef19</name>
    <name type="synonym">Wgef</name>
</gene>
<dbReference type="EMBL" id="AK053075">
    <property type="protein sequence ID" value="BAC35256.1"/>
    <property type="molecule type" value="mRNA"/>
</dbReference>
<dbReference type="EMBL" id="AL607087">
    <property type="status" value="NOT_ANNOTATED_CDS"/>
    <property type="molecule type" value="Genomic_DNA"/>
</dbReference>
<dbReference type="EMBL" id="BC060376">
    <property type="protein sequence ID" value="AAH60376.1"/>
    <property type="molecule type" value="mRNA"/>
</dbReference>
<dbReference type="CCDS" id="CCDS18868.1"/>
<dbReference type="RefSeq" id="NP_001366576.1">
    <property type="nucleotide sequence ID" value="NM_001379647.1"/>
</dbReference>
<dbReference type="RefSeq" id="NP_001366581.1">
    <property type="nucleotide sequence ID" value="NM_001379652.1"/>
</dbReference>
<dbReference type="RefSeq" id="NP_766108.1">
    <property type="nucleotide sequence ID" value="NM_172520.3"/>
</dbReference>
<dbReference type="RefSeq" id="XP_006538767.1">
    <property type="nucleotide sequence ID" value="XM_006538704.2"/>
</dbReference>
<dbReference type="RefSeq" id="XP_006538768.1">
    <property type="nucleotide sequence ID" value="XM_006538705.2"/>
</dbReference>
<dbReference type="RefSeq" id="XP_006538769.1">
    <property type="nucleotide sequence ID" value="XM_006538706.3"/>
</dbReference>
<dbReference type="RefSeq" id="XP_006538770.1">
    <property type="nucleotide sequence ID" value="XM_006538707.3"/>
</dbReference>
<dbReference type="RefSeq" id="XP_006538771.1">
    <property type="nucleotide sequence ID" value="XM_006538708.4"/>
</dbReference>
<dbReference type="RefSeq" id="XP_006538772.1">
    <property type="nucleotide sequence ID" value="XM_006538709.5"/>
</dbReference>
<dbReference type="RefSeq" id="XP_011248527.1">
    <property type="nucleotide sequence ID" value="XM_011250225.3"/>
</dbReference>
<dbReference type="RefSeq" id="XP_017175587.1">
    <property type="nucleotide sequence ID" value="XM_017320098.1"/>
</dbReference>
<dbReference type="SMR" id="Q8BWA8"/>
<dbReference type="BioGRID" id="229460">
    <property type="interactions" value="5"/>
</dbReference>
<dbReference type="FunCoup" id="Q8BWA8">
    <property type="interactions" value="41"/>
</dbReference>
<dbReference type="STRING" id="10090.ENSMUSP00000006618"/>
<dbReference type="GlyGen" id="Q8BWA8">
    <property type="glycosylation" value="1 site"/>
</dbReference>
<dbReference type="iPTMnet" id="Q8BWA8"/>
<dbReference type="PhosphoSitePlus" id="Q8BWA8"/>
<dbReference type="jPOST" id="Q8BWA8"/>
<dbReference type="PaxDb" id="10090-ENSMUSP00000006618"/>
<dbReference type="ProteomicsDB" id="265091"/>
<dbReference type="Antibodypedia" id="46665">
    <property type="antibodies" value="81 antibodies from 27 providers"/>
</dbReference>
<dbReference type="DNASU" id="213649"/>
<dbReference type="Ensembl" id="ENSMUST00000006618.9">
    <property type="protein sequence ID" value="ENSMUSP00000006618.3"/>
    <property type="gene ID" value="ENSMUSG00000028919.12"/>
</dbReference>
<dbReference type="GeneID" id="213649"/>
<dbReference type="KEGG" id="mmu:213649"/>
<dbReference type="UCSC" id="uc008vob.1">
    <property type="organism name" value="mouse"/>
</dbReference>
<dbReference type="AGR" id="MGI:1925912"/>
<dbReference type="CTD" id="128272"/>
<dbReference type="MGI" id="MGI:1925912">
    <property type="gene designation" value="Arhgef19"/>
</dbReference>
<dbReference type="VEuPathDB" id="HostDB:ENSMUSG00000028919"/>
<dbReference type="eggNOG" id="KOG3523">
    <property type="taxonomic scope" value="Eukaryota"/>
</dbReference>
<dbReference type="GeneTree" id="ENSGT01030000234571"/>
<dbReference type="HOGENOM" id="CLU_012820_1_0_1"/>
<dbReference type="InParanoid" id="Q8BWA8"/>
<dbReference type="OMA" id="QDRPQVQ"/>
<dbReference type="OrthoDB" id="27593at2759"/>
<dbReference type="PhylomeDB" id="Q8BWA8"/>
<dbReference type="TreeFam" id="TF316357"/>
<dbReference type="Reactome" id="R-MMU-193648">
    <property type="pathway name" value="NRAGE signals death through JNK"/>
</dbReference>
<dbReference type="Reactome" id="R-MMU-416482">
    <property type="pathway name" value="G alpha (12/13) signalling events"/>
</dbReference>
<dbReference type="Reactome" id="R-MMU-8980692">
    <property type="pathway name" value="RHOA GTPase cycle"/>
</dbReference>
<dbReference type="Reactome" id="R-MMU-9013148">
    <property type="pathway name" value="CDC42 GTPase cycle"/>
</dbReference>
<dbReference type="Reactome" id="R-MMU-9013149">
    <property type="pathway name" value="RAC1 GTPase cycle"/>
</dbReference>
<dbReference type="BioGRID-ORCS" id="213649">
    <property type="hits" value="2 hits in 78 CRISPR screens"/>
</dbReference>
<dbReference type="ChiTaRS" id="Arhgef19">
    <property type="organism name" value="mouse"/>
</dbReference>
<dbReference type="PRO" id="PR:Q8BWA8"/>
<dbReference type="Proteomes" id="UP000000589">
    <property type="component" value="Chromosome 4"/>
</dbReference>
<dbReference type="RNAct" id="Q8BWA8">
    <property type="molecule type" value="protein"/>
</dbReference>
<dbReference type="Bgee" id="ENSMUSG00000028919">
    <property type="expression patterns" value="Expressed in dorsal pancreas and 175 other cell types or tissues"/>
</dbReference>
<dbReference type="ExpressionAtlas" id="Q8BWA8">
    <property type="expression patterns" value="baseline and differential"/>
</dbReference>
<dbReference type="GO" id="GO:0005096">
    <property type="term" value="F:GTPase activator activity"/>
    <property type="evidence" value="ECO:0007669"/>
    <property type="project" value="UniProtKB-KW"/>
</dbReference>
<dbReference type="GO" id="GO:0005085">
    <property type="term" value="F:guanyl-nucleotide exchange factor activity"/>
    <property type="evidence" value="ECO:0007669"/>
    <property type="project" value="UniProtKB-KW"/>
</dbReference>
<dbReference type="GO" id="GO:0032956">
    <property type="term" value="P:regulation of actin cytoskeleton organization"/>
    <property type="evidence" value="ECO:0000266"/>
    <property type="project" value="MGI"/>
</dbReference>
<dbReference type="GO" id="GO:0042060">
    <property type="term" value="P:wound healing"/>
    <property type="evidence" value="ECO:0000315"/>
    <property type="project" value="MGI"/>
</dbReference>
<dbReference type="CDD" id="cd01221">
    <property type="entry name" value="PH_ephexin"/>
    <property type="match status" value="1"/>
</dbReference>
<dbReference type="CDD" id="cd00160">
    <property type="entry name" value="RhoGEF"/>
    <property type="match status" value="1"/>
</dbReference>
<dbReference type="FunFam" id="2.30.29.30:FF:000205">
    <property type="entry name" value="Rho guanine nucleotide exchange factor (GEF) 19"/>
    <property type="match status" value="1"/>
</dbReference>
<dbReference type="FunFam" id="2.30.30.40:FF:000111">
    <property type="entry name" value="Rho guanine nucleotide exchange factor (GEF) 5"/>
    <property type="match status" value="1"/>
</dbReference>
<dbReference type="FunFam" id="1.20.900.10:FF:000007">
    <property type="entry name" value="rho guanine nucleotide exchange factor 19"/>
    <property type="match status" value="1"/>
</dbReference>
<dbReference type="Gene3D" id="1.20.900.10">
    <property type="entry name" value="Dbl homology (DH) domain"/>
    <property type="match status" value="1"/>
</dbReference>
<dbReference type="Gene3D" id="2.30.29.30">
    <property type="entry name" value="Pleckstrin-homology domain (PH domain)/Phosphotyrosine-binding domain (PTB)"/>
    <property type="match status" value="1"/>
</dbReference>
<dbReference type="Gene3D" id="2.30.30.40">
    <property type="entry name" value="SH3 Domains"/>
    <property type="match status" value="1"/>
</dbReference>
<dbReference type="InterPro" id="IPR035899">
    <property type="entry name" value="DBL_dom_sf"/>
</dbReference>
<dbReference type="InterPro" id="IPR000219">
    <property type="entry name" value="DH_dom"/>
</dbReference>
<dbReference type="InterPro" id="IPR047271">
    <property type="entry name" value="Ephexin-like"/>
</dbReference>
<dbReference type="InterPro" id="IPR011993">
    <property type="entry name" value="PH-like_dom_sf"/>
</dbReference>
<dbReference type="InterPro" id="IPR001849">
    <property type="entry name" value="PH_domain"/>
</dbReference>
<dbReference type="InterPro" id="IPR047270">
    <property type="entry name" value="PH_ephexin"/>
</dbReference>
<dbReference type="InterPro" id="IPR036028">
    <property type="entry name" value="SH3-like_dom_sf"/>
</dbReference>
<dbReference type="InterPro" id="IPR001452">
    <property type="entry name" value="SH3_domain"/>
</dbReference>
<dbReference type="PANTHER" id="PTHR12845">
    <property type="entry name" value="GUANINE NUCLEOTIDE EXCHANGE FACTOR"/>
    <property type="match status" value="1"/>
</dbReference>
<dbReference type="PANTHER" id="PTHR12845:SF6">
    <property type="entry name" value="RHO GUANINE NUCLEOTIDE EXCHANGE FACTOR 19"/>
    <property type="match status" value="1"/>
</dbReference>
<dbReference type="Pfam" id="PF00169">
    <property type="entry name" value="PH"/>
    <property type="match status" value="1"/>
</dbReference>
<dbReference type="Pfam" id="PF00621">
    <property type="entry name" value="RhoGEF"/>
    <property type="match status" value="1"/>
</dbReference>
<dbReference type="Pfam" id="PF07653">
    <property type="entry name" value="SH3_2"/>
    <property type="match status" value="1"/>
</dbReference>
<dbReference type="SMART" id="SM00233">
    <property type="entry name" value="PH"/>
    <property type="match status" value="1"/>
</dbReference>
<dbReference type="SMART" id="SM00325">
    <property type="entry name" value="RhoGEF"/>
    <property type="match status" value="1"/>
</dbReference>
<dbReference type="SMART" id="SM00326">
    <property type="entry name" value="SH3"/>
    <property type="match status" value="1"/>
</dbReference>
<dbReference type="SUPFAM" id="SSF48065">
    <property type="entry name" value="DBL homology domain (DH-domain)"/>
    <property type="match status" value="1"/>
</dbReference>
<dbReference type="SUPFAM" id="SSF50729">
    <property type="entry name" value="PH domain-like"/>
    <property type="match status" value="1"/>
</dbReference>
<dbReference type="SUPFAM" id="SSF50044">
    <property type="entry name" value="SH3-domain"/>
    <property type="match status" value="1"/>
</dbReference>
<dbReference type="PROSITE" id="PS50010">
    <property type="entry name" value="DH_2"/>
    <property type="match status" value="1"/>
</dbReference>
<dbReference type="PROSITE" id="PS50003">
    <property type="entry name" value="PH_DOMAIN"/>
    <property type="match status" value="1"/>
</dbReference>
<dbReference type="PROSITE" id="PS50002">
    <property type="entry name" value="SH3"/>
    <property type="match status" value="1"/>
</dbReference>
<sequence>MDCGPPATLQPHLAGPPGTARRPVAVCQQESLSFVELPPSRLCVDLFPIAPEELQAPGSRWSLATPAPLQGLLWPTSPGGPDTHIASTSGGMRPGRAGSWPHCPGAQPPTLVEPWSSQHMQPQRRASHSGSEKSAWRKMQVYHNEEATGTETPTGLLETGQAAQEQALCALEPGPQELSGNARGGLEAPERRRFSASELMTRLHSSLRLGRSTATRVLTSGSGAGAIREGKLPVRESRRAETRADSVSLPGPVDLNEVHGGLVEPRLDTQDKPTQDPSSATERRQSRFLLNSVLYQEYSDVASARELRRQQREEEGPGDGAEGAEEGPGPPRANLSPSSSFRAQRSTRGSTFSLWQDIPDVRGSGVLATLSLRDCKLQEAKFELITSEASYIHSLSVAVGHFLGSVELSECLGTQDKQWLFSKLPEVKSTSERFLHDLEQRLEADVLRFSVCDVVLHHCPAFRRVYLPYVTNQAYQERTYQRLLLENPKFPGILARLEESPVCQRLPLTSFLILPFQRVTRLKMLVENILKRTAPGSQDEDMATKAFSALKELVQECNASVQSMKRTEELIHLSKKIHFEGKIFPLISQARWLVRHGELVELAPLPAAPPAKLKLSSKAVYLHLFNDCLLLSRRKELGKFAVFVHANMAELQVRDLSLKLQGIPGHVFLLRLLHGQRARHQLLLRARTESEKQRWISALRPSSPQEDKEITCDGEDRPQVQCVRTYKALQPDELTLEKTDILAVKTRTSDGWLEGVRLADGEKGWVPQAHVVEISSLSARLRNLREYKRVSNASSKLGDPPA</sequence>
<feature type="chain" id="PRO_0000285132" description="Rho guanine nucleotide exchange factor 19">
    <location>
        <begin position="1"/>
        <end position="802"/>
    </location>
</feature>
<feature type="domain" description="DH" evidence="1">
    <location>
        <begin position="376"/>
        <end position="560"/>
    </location>
</feature>
<feature type="domain" description="PH" evidence="2">
    <location>
        <begin position="592"/>
        <end position="704"/>
    </location>
</feature>
<feature type="domain" description="SH3" evidence="3">
    <location>
        <begin position="715"/>
        <end position="776"/>
    </location>
</feature>
<feature type="region of interest" description="Disordered" evidence="4">
    <location>
        <begin position="1"/>
        <end position="21"/>
    </location>
</feature>
<feature type="region of interest" description="Disordered" evidence="4">
    <location>
        <begin position="77"/>
        <end position="136"/>
    </location>
</feature>
<feature type="region of interest" description="Disordered" evidence="4">
    <location>
        <begin position="173"/>
        <end position="192"/>
    </location>
</feature>
<feature type="region of interest" description="Disordered" evidence="4">
    <location>
        <begin position="218"/>
        <end position="286"/>
    </location>
</feature>
<feature type="region of interest" description="Disordered" evidence="4">
    <location>
        <begin position="307"/>
        <end position="343"/>
    </location>
</feature>
<feature type="compositionally biased region" description="Basic and acidic residues" evidence="4">
    <location>
        <begin position="228"/>
        <end position="244"/>
    </location>
</feature>
<feature type="compositionally biased region" description="Basic and acidic residues" evidence="4">
    <location>
        <begin position="265"/>
        <end position="274"/>
    </location>
</feature>
<feature type="sequence conflict" description="In Ref. 3; AAH60376." evidence="6" ref="3">
    <original>G</original>
    <variation>S</variation>
    <location>
        <position position="492"/>
    </location>
</feature>
<accession>Q8BWA8</accession>
<accession>Q6PAC2</accession>
<organism>
    <name type="scientific">Mus musculus</name>
    <name type="common">Mouse</name>
    <dbReference type="NCBI Taxonomy" id="10090"/>
    <lineage>
        <taxon>Eukaryota</taxon>
        <taxon>Metazoa</taxon>
        <taxon>Chordata</taxon>
        <taxon>Craniata</taxon>
        <taxon>Vertebrata</taxon>
        <taxon>Euteleostomi</taxon>
        <taxon>Mammalia</taxon>
        <taxon>Eutheria</taxon>
        <taxon>Euarchontoglires</taxon>
        <taxon>Glires</taxon>
        <taxon>Rodentia</taxon>
        <taxon>Myomorpha</taxon>
        <taxon>Muroidea</taxon>
        <taxon>Muridae</taxon>
        <taxon>Murinae</taxon>
        <taxon>Mus</taxon>
        <taxon>Mus</taxon>
    </lineage>
</organism>
<comment type="function">
    <text evidence="5">Acts as a guanine nucleotide exchange factor (GEF) for RhoA GTPase.</text>
</comment>
<comment type="tissue specificity">
    <text evidence="5">Highly expressed in intestine, and at lower levels in liver, heart and kidney.</text>
</comment>
<evidence type="ECO:0000255" key="1">
    <source>
        <dbReference type="PROSITE-ProRule" id="PRU00062"/>
    </source>
</evidence>
<evidence type="ECO:0000255" key="2">
    <source>
        <dbReference type="PROSITE-ProRule" id="PRU00145"/>
    </source>
</evidence>
<evidence type="ECO:0000255" key="3">
    <source>
        <dbReference type="PROSITE-ProRule" id="PRU00192"/>
    </source>
</evidence>
<evidence type="ECO:0000256" key="4">
    <source>
        <dbReference type="SAM" id="MobiDB-lite"/>
    </source>
</evidence>
<evidence type="ECO:0000269" key="5">
    <source>
    </source>
</evidence>
<evidence type="ECO:0000305" key="6"/>